<dbReference type="EMBL" id="AY089976">
    <property type="protein sequence ID" value="AAM11892.1"/>
    <property type="molecule type" value="mRNA"/>
</dbReference>
<dbReference type="EMBL" id="AB084080">
    <property type="protein sequence ID" value="BAC24021.1"/>
    <property type="molecule type" value="mRNA"/>
</dbReference>
<dbReference type="EMBL" id="AF506287">
    <property type="protein sequence ID" value="AAM48127.1"/>
    <property type="molecule type" value="mRNA"/>
</dbReference>
<dbReference type="EMBL" id="AC105054">
    <property type="protein sequence ID" value="AAY24114.1"/>
    <property type="molecule type" value="Genomic_DNA"/>
</dbReference>
<dbReference type="EMBL" id="EF577399">
    <property type="protein sequence ID" value="ABQ52419.1"/>
    <property type="molecule type" value="mRNA"/>
</dbReference>
<dbReference type="EMBL" id="BC100960">
    <property type="protein sequence ID" value="AAI00961.1"/>
    <property type="molecule type" value="mRNA"/>
</dbReference>
<dbReference type="CCDS" id="CCDS1889.1"/>
<dbReference type="RefSeq" id="NP_620414.1">
    <property type="nucleotide sequence ID" value="NM_138964.4"/>
</dbReference>
<dbReference type="SMR" id="Q8TCW9"/>
<dbReference type="BioGRID" id="116094">
    <property type="interactions" value="25"/>
</dbReference>
<dbReference type="FunCoup" id="Q8TCW9">
    <property type="interactions" value="868"/>
</dbReference>
<dbReference type="IntAct" id="Q8TCW9">
    <property type="interactions" value="19"/>
</dbReference>
<dbReference type="MINT" id="Q8TCW9"/>
<dbReference type="STRING" id="9606.ENSP00000303775"/>
<dbReference type="BindingDB" id="Q8TCW9"/>
<dbReference type="ChEMBL" id="CHEMBL5649"/>
<dbReference type="GuidetoPHARMACOLOGY" id="335"/>
<dbReference type="TCDB" id="9.A.14.13.38">
    <property type="family name" value="the g-protein-coupled receptor (gpcr) family"/>
</dbReference>
<dbReference type="GlyCosmos" id="Q8TCW9">
    <property type="glycosylation" value="3 sites, No reported glycans"/>
</dbReference>
<dbReference type="GlyGen" id="Q8TCW9">
    <property type="glycosylation" value="3 sites"/>
</dbReference>
<dbReference type="iPTMnet" id="Q8TCW9"/>
<dbReference type="PhosphoSitePlus" id="Q8TCW9"/>
<dbReference type="BioMuta" id="PROKR1"/>
<dbReference type="DMDM" id="33112428"/>
<dbReference type="MassIVE" id="Q8TCW9"/>
<dbReference type="PaxDb" id="9606-ENSP00000303775"/>
<dbReference type="PeptideAtlas" id="Q8TCW9"/>
<dbReference type="ProteomicsDB" id="74182"/>
<dbReference type="Antibodypedia" id="30945">
    <property type="antibodies" value="136 antibodies from 20 providers"/>
</dbReference>
<dbReference type="DNASU" id="10887"/>
<dbReference type="Ensembl" id="ENST00000303786.5">
    <property type="protein sequence ID" value="ENSP00000303775.4"/>
    <property type="gene ID" value="ENSG00000169618.7"/>
</dbReference>
<dbReference type="GeneID" id="10887"/>
<dbReference type="KEGG" id="hsa:10887"/>
<dbReference type="MANE-Select" id="ENST00000303786.5">
    <property type="protein sequence ID" value="ENSP00000303775.4"/>
    <property type="RefSeq nucleotide sequence ID" value="NM_138964.4"/>
    <property type="RefSeq protein sequence ID" value="NP_620414.1"/>
</dbReference>
<dbReference type="UCSC" id="uc010yqj.3">
    <property type="organism name" value="human"/>
</dbReference>
<dbReference type="AGR" id="HGNC:4524"/>
<dbReference type="CTD" id="10887"/>
<dbReference type="DisGeNET" id="10887"/>
<dbReference type="GeneCards" id="PROKR1"/>
<dbReference type="HGNC" id="HGNC:4524">
    <property type="gene designation" value="PROKR1"/>
</dbReference>
<dbReference type="HPA" id="ENSG00000169618">
    <property type="expression patterns" value="Tissue enhanced (adipose tissue, adrenal gland, epididymis)"/>
</dbReference>
<dbReference type="MalaCards" id="PROKR1"/>
<dbReference type="MIM" id="607122">
    <property type="type" value="gene"/>
</dbReference>
<dbReference type="neXtProt" id="NX_Q8TCW9"/>
<dbReference type="OpenTargets" id="ENSG00000169618"/>
<dbReference type="PharmGKB" id="PA28916"/>
<dbReference type="VEuPathDB" id="HostDB:ENSG00000169618"/>
<dbReference type="eggNOG" id="KOG3656">
    <property type="taxonomic scope" value="Eukaryota"/>
</dbReference>
<dbReference type="GeneTree" id="ENSGT00940000154544"/>
<dbReference type="HOGENOM" id="CLU_009579_6_0_1"/>
<dbReference type="InParanoid" id="Q8TCW9"/>
<dbReference type="OMA" id="HGHVMCA"/>
<dbReference type="OrthoDB" id="10053194at2759"/>
<dbReference type="PAN-GO" id="Q8TCW9">
    <property type="GO annotations" value="3 GO annotations based on evolutionary models"/>
</dbReference>
<dbReference type="PhylomeDB" id="Q8TCW9"/>
<dbReference type="TreeFam" id="TF315303"/>
<dbReference type="PathwayCommons" id="Q8TCW9"/>
<dbReference type="Reactome" id="R-HSA-375276">
    <property type="pathway name" value="Peptide ligand-binding receptors"/>
</dbReference>
<dbReference type="Reactome" id="R-HSA-416476">
    <property type="pathway name" value="G alpha (q) signalling events"/>
</dbReference>
<dbReference type="SignaLink" id="Q8TCW9"/>
<dbReference type="SIGNOR" id="Q8TCW9"/>
<dbReference type="BioGRID-ORCS" id="10887">
    <property type="hits" value="15 hits in 1137 CRISPR screens"/>
</dbReference>
<dbReference type="GeneWiki" id="Prokineticin_receptor_1"/>
<dbReference type="GenomeRNAi" id="10887"/>
<dbReference type="Pharos" id="Q8TCW9">
    <property type="development level" value="Tchem"/>
</dbReference>
<dbReference type="PRO" id="PR:Q8TCW9"/>
<dbReference type="Proteomes" id="UP000005640">
    <property type="component" value="Chromosome 2"/>
</dbReference>
<dbReference type="RNAct" id="Q8TCW9">
    <property type="molecule type" value="protein"/>
</dbReference>
<dbReference type="Bgee" id="ENSG00000169618">
    <property type="expression patterns" value="Expressed in primordial germ cell in gonad and 34 other cell types or tissues"/>
</dbReference>
<dbReference type="GO" id="GO:0005886">
    <property type="term" value="C:plasma membrane"/>
    <property type="evidence" value="ECO:0000318"/>
    <property type="project" value="GO_Central"/>
</dbReference>
<dbReference type="GO" id="GO:0004930">
    <property type="term" value="F:G protein-coupled receptor activity"/>
    <property type="evidence" value="ECO:0000318"/>
    <property type="project" value="GO_Central"/>
</dbReference>
<dbReference type="GO" id="GO:0004983">
    <property type="term" value="F:neuropeptide Y receptor activity"/>
    <property type="evidence" value="ECO:0007669"/>
    <property type="project" value="InterPro"/>
</dbReference>
<dbReference type="GO" id="GO:0032870">
    <property type="term" value="P:cellular response to hormone stimulus"/>
    <property type="evidence" value="ECO:0000318"/>
    <property type="project" value="GO_Central"/>
</dbReference>
<dbReference type="GO" id="GO:0007623">
    <property type="term" value="P:circadian rhythm"/>
    <property type="evidence" value="ECO:0000318"/>
    <property type="project" value="GO_Central"/>
</dbReference>
<dbReference type="GO" id="GO:0007186">
    <property type="term" value="P:G protein-coupled receptor signaling pathway"/>
    <property type="evidence" value="ECO:0000318"/>
    <property type="project" value="GO_Central"/>
</dbReference>
<dbReference type="CDD" id="cd15204">
    <property type="entry name" value="7tmA_prokineticin-R"/>
    <property type="match status" value="1"/>
</dbReference>
<dbReference type="FunFam" id="1.20.1070.10:FF:000069">
    <property type="entry name" value="Prokineticin receptor 2"/>
    <property type="match status" value="1"/>
</dbReference>
<dbReference type="Gene3D" id="1.20.1070.10">
    <property type="entry name" value="Rhodopsin 7-helix transmembrane proteins"/>
    <property type="match status" value="1"/>
</dbReference>
<dbReference type="InterPro" id="IPR000276">
    <property type="entry name" value="GPCR_Rhodpsn"/>
</dbReference>
<dbReference type="InterPro" id="IPR017452">
    <property type="entry name" value="GPCR_Rhodpsn_7TM"/>
</dbReference>
<dbReference type="InterPro" id="IPR000611">
    <property type="entry name" value="NPY_rcpt"/>
</dbReference>
<dbReference type="PANTHER" id="PTHR24238">
    <property type="entry name" value="G-PROTEIN COUPLED RECEPTOR"/>
    <property type="match status" value="1"/>
</dbReference>
<dbReference type="PANTHER" id="PTHR24238:SF74">
    <property type="entry name" value="PROKINETICIN RECEPTOR 2"/>
    <property type="match status" value="1"/>
</dbReference>
<dbReference type="Pfam" id="PF00001">
    <property type="entry name" value="7tm_1"/>
    <property type="match status" value="1"/>
</dbReference>
<dbReference type="PRINTS" id="PR00237">
    <property type="entry name" value="GPCRRHODOPSN"/>
</dbReference>
<dbReference type="PRINTS" id="PR01012">
    <property type="entry name" value="NRPEPTIDEYR"/>
</dbReference>
<dbReference type="SUPFAM" id="SSF81321">
    <property type="entry name" value="Family A G protein-coupled receptor-like"/>
    <property type="match status" value="1"/>
</dbReference>
<dbReference type="PROSITE" id="PS00237">
    <property type="entry name" value="G_PROTEIN_RECEP_F1_1"/>
    <property type="match status" value="1"/>
</dbReference>
<dbReference type="PROSITE" id="PS50262">
    <property type="entry name" value="G_PROTEIN_RECEP_F1_2"/>
    <property type="match status" value="1"/>
</dbReference>
<accession>Q8TCW9</accession>
<accession>A5JUU2</accession>
<accession>Q53QT9</accession>
<accession>Q8NFJ7</accession>
<protein>
    <recommendedName>
        <fullName>Prokineticin receptor 1</fullName>
        <shortName>PK-R1</shortName>
    </recommendedName>
    <alternativeName>
        <fullName>G-protein coupled receptor 73</fullName>
    </alternativeName>
    <alternativeName>
        <fullName>G-protein coupled receptor ZAQ</fullName>
    </alternativeName>
    <alternativeName>
        <fullName>GPR73a</fullName>
    </alternativeName>
</protein>
<keyword id="KW-1003">Cell membrane</keyword>
<keyword id="KW-1015">Disulfide bond</keyword>
<keyword id="KW-0297">G-protein coupled receptor</keyword>
<keyword id="KW-0325">Glycoprotein</keyword>
<keyword id="KW-0472">Membrane</keyword>
<keyword id="KW-1267">Proteomics identification</keyword>
<keyword id="KW-0675">Receptor</keyword>
<keyword id="KW-1185">Reference proteome</keyword>
<keyword id="KW-0807">Transducer</keyword>
<keyword id="KW-0812">Transmembrane</keyword>
<keyword id="KW-1133">Transmembrane helix</keyword>
<reference key="1">
    <citation type="journal article" date="2002" name="Biochem. Biophys. Res. Commun.">
        <title>Isolation and identification of EG-VEGF/prokineticins as cognate ligands for two orphan G-protein-coupled receptors.</title>
        <authorList>
            <person name="Masuda Y."/>
            <person name="Takatsu Y."/>
            <person name="Terao Y."/>
            <person name="Kumano S."/>
            <person name="Ishibashi Y."/>
            <person name="Suenaga M."/>
            <person name="Abe M."/>
            <person name="Fukusumi S."/>
            <person name="Watanabe T."/>
            <person name="Shintani Y."/>
            <person name="Yamada T."/>
            <person name="Hinuma S."/>
            <person name="Inatomi N."/>
            <person name="Ohtaki T."/>
            <person name="Onda H."/>
            <person name="Fujino M."/>
        </authorList>
    </citation>
    <scope>NUCLEOTIDE SEQUENCE [MRNA]</scope>
</reference>
<reference key="2">
    <citation type="journal article" date="2002" name="Biochim. Biophys. Acta">
        <title>Molecular cloning and characterization of prokineticin receptors.</title>
        <authorList>
            <person name="Soga T."/>
            <person name="Matsumoto S."/>
            <person name="Oda T."/>
            <person name="Saito T."/>
            <person name="Hiyama H."/>
            <person name="Takasaki J."/>
            <person name="Kamohara M."/>
            <person name="Ohishi T."/>
            <person name="Matsushime H."/>
            <person name="Furuichi K."/>
        </authorList>
    </citation>
    <scope>NUCLEOTIDE SEQUENCE [MRNA]</scope>
</reference>
<reference key="3">
    <citation type="journal article" date="2002" name="J. Biol. Chem.">
        <title>Identification and molecular characterization of two closely related G protein-coupled receptors activated by prokineticins/endocrine gland vascular endothelial growth factor.</title>
        <authorList>
            <person name="Lin D.C.-H."/>
            <person name="Bullock C.M."/>
            <person name="Ehlert F.J."/>
            <person name="Chen J.-L."/>
            <person name="Tian H."/>
            <person name="Zhou Q.-Y."/>
        </authorList>
    </citation>
    <scope>NUCLEOTIDE SEQUENCE [MRNA]</scope>
</reference>
<reference key="4">
    <citation type="journal article" date="2005" name="Nature">
        <title>Generation and annotation of the DNA sequences of human chromosomes 2 and 4.</title>
        <authorList>
            <person name="Hillier L.W."/>
            <person name="Graves T.A."/>
            <person name="Fulton R.S."/>
            <person name="Fulton L.A."/>
            <person name="Pepin K.H."/>
            <person name="Minx P."/>
            <person name="Wagner-McPherson C."/>
            <person name="Layman D."/>
            <person name="Wylie K."/>
            <person name="Sekhon M."/>
            <person name="Becker M.C."/>
            <person name="Fewell G.A."/>
            <person name="Delehaunty K.D."/>
            <person name="Miner T.L."/>
            <person name="Nash W.E."/>
            <person name="Kremitzki C."/>
            <person name="Oddy L."/>
            <person name="Du H."/>
            <person name="Sun H."/>
            <person name="Bradshaw-Cordum H."/>
            <person name="Ali J."/>
            <person name="Carter J."/>
            <person name="Cordes M."/>
            <person name="Harris A."/>
            <person name="Isak A."/>
            <person name="van Brunt A."/>
            <person name="Nguyen C."/>
            <person name="Du F."/>
            <person name="Courtney L."/>
            <person name="Kalicki J."/>
            <person name="Ozersky P."/>
            <person name="Abbott S."/>
            <person name="Armstrong J."/>
            <person name="Belter E.A."/>
            <person name="Caruso L."/>
            <person name="Cedroni M."/>
            <person name="Cotton M."/>
            <person name="Davidson T."/>
            <person name="Desai A."/>
            <person name="Elliott G."/>
            <person name="Erb T."/>
            <person name="Fronick C."/>
            <person name="Gaige T."/>
            <person name="Haakenson W."/>
            <person name="Haglund K."/>
            <person name="Holmes A."/>
            <person name="Harkins R."/>
            <person name="Kim K."/>
            <person name="Kruchowski S.S."/>
            <person name="Strong C.M."/>
            <person name="Grewal N."/>
            <person name="Goyea E."/>
            <person name="Hou S."/>
            <person name="Levy A."/>
            <person name="Martinka S."/>
            <person name="Mead K."/>
            <person name="McLellan M.D."/>
            <person name="Meyer R."/>
            <person name="Randall-Maher J."/>
            <person name="Tomlinson C."/>
            <person name="Dauphin-Kohlberg S."/>
            <person name="Kozlowicz-Reilly A."/>
            <person name="Shah N."/>
            <person name="Swearengen-Shahid S."/>
            <person name="Snider J."/>
            <person name="Strong J.T."/>
            <person name="Thompson J."/>
            <person name="Yoakum M."/>
            <person name="Leonard S."/>
            <person name="Pearman C."/>
            <person name="Trani L."/>
            <person name="Radionenko M."/>
            <person name="Waligorski J.E."/>
            <person name="Wang C."/>
            <person name="Rock S.M."/>
            <person name="Tin-Wollam A.-M."/>
            <person name="Maupin R."/>
            <person name="Latreille P."/>
            <person name="Wendl M.C."/>
            <person name="Yang S.-P."/>
            <person name="Pohl C."/>
            <person name="Wallis J.W."/>
            <person name="Spieth J."/>
            <person name="Bieri T.A."/>
            <person name="Berkowicz N."/>
            <person name="Nelson J.O."/>
            <person name="Osborne J."/>
            <person name="Ding L."/>
            <person name="Meyer R."/>
            <person name="Sabo A."/>
            <person name="Shotland Y."/>
            <person name="Sinha P."/>
            <person name="Wohldmann P.E."/>
            <person name="Cook L.L."/>
            <person name="Hickenbotham M.T."/>
            <person name="Eldred J."/>
            <person name="Williams D."/>
            <person name="Jones T.A."/>
            <person name="She X."/>
            <person name="Ciccarelli F.D."/>
            <person name="Izaurralde E."/>
            <person name="Taylor J."/>
            <person name="Schmutz J."/>
            <person name="Myers R.M."/>
            <person name="Cox D.R."/>
            <person name="Huang X."/>
            <person name="McPherson J.D."/>
            <person name="Mardis E.R."/>
            <person name="Clifton S.W."/>
            <person name="Warren W.C."/>
            <person name="Chinwalla A.T."/>
            <person name="Eddy S.R."/>
            <person name="Marra M.A."/>
            <person name="Ovcharenko I."/>
            <person name="Furey T.S."/>
            <person name="Miller W."/>
            <person name="Eichler E.E."/>
            <person name="Bork P."/>
            <person name="Suyama M."/>
            <person name="Torrents D."/>
            <person name="Waterston R.H."/>
            <person name="Wilson R.K."/>
        </authorList>
    </citation>
    <scope>NUCLEOTIDE SEQUENCE [LARGE SCALE GENOMIC DNA]</scope>
</reference>
<reference key="5">
    <citation type="submission" date="2007-04" db="EMBL/GenBank/DDBJ databases">
        <authorList>
            <person name="Martin A.L."/>
            <person name="Kaighin V.A."/>
            <person name="Aronstam R.S."/>
        </authorList>
    </citation>
    <scope>NUCLEOTIDE SEQUENCE [MRNA]</scope>
    <source>
        <tissue>Testis</tissue>
    </source>
</reference>
<reference key="6">
    <citation type="journal article" date="2004" name="Genome Res.">
        <title>The status, quality, and expansion of the NIH full-length cDNA project: the Mammalian Gene Collection (MGC).</title>
        <authorList>
            <consortium name="The MGC Project Team"/>
        </authorList>
    </citation>
    <scope>NUCLEOTIDE SEQUENCE [LARGE SCALE MRNA]</scope>
</reference>
<reference key="7">
    <citation type="journal article" date="2008" name="Endocrinology">
        <title>Prokineticin 1 signaling and gene regulation in early human pregnancy.</title>
        <authorList>
            <person name="Evans J."/>
            <person name="Catalano R.D."/>
            <person name="Morgan K."/>
            <person name="Critchley H.O.D."/>
            <person name="Millar R.P."/>
            <person name="Jabbour H.N."/>
        </authorList>
    </citation>
    <scope>FUNCTION</scope>
    <scope>TISSUE SPECIFICITY</scope>
</reference>
<proteinExistence type="evidence at protein level"/>
<comment type="function">
    <text evidence="3">Receptor for prokineticin 1. Exclusively coupled to the G(q) subclass of heteromeric G proteins. Activation leads to mobilization of calcium, stimulation of phosphoinositide turnover and activation of p44/p42 mitogen-activated protein kinase. May play a role during early pregnancy.</text>
</comment>
<comment type="subcellular location">
    <subcellularLocation>
        <location>Cell membrane</location>
        <topology>Multi-pass membrane protein</topology>
    </subcellularLocation>
</comment>
<comment type="tissue specificity">
    <text evidence="3">Localizes to glandular epithelium, stroma and vascular endothelial cells of first trimester decidua (at protein level). Up-regulated in first trimester decidua when compared with non-pregnant endometrium. Expressed in the stomach, throughout the small intestine, colon, rectum, thyroid gland, pituitary gland, salivary gland, adrenal gland, testis, ovary, brain, spleen, prostate and pancreas.</text>
</comment>
<comment type="similarity">
    <text evidence="2">Belongs to the G-protein coupled receptor 1 family.</text>
</comment>
<organism>
    <name type="scientific">Homo sapiens</name>
    <name type="common">Human</name>
    <dbReference type="NCBI Taxonomy" id="9606"/>
    <lineage>
        <taxon>Eukaryota</taxon>
        <taxon>Metazoa</taxon>
        <taxon>Chordata</taxon>
        <taxon>Craniata</taxon>
        <taxon>Vertebrata</taxon>
        <taxon>Euteleostomi</taxon>
        <taxon>Mammalia</taxon>
        <taxon>Eutheria</taxon>
        <taxon>Euarchontoglires</taxon>
        <taxon>Primates</taxon>
        <taxon>Haplorrhini</taxon>
        <taxon>Catarrhini</taxon>
        <taxon>Hominidae</taxon>
        <taxon>Homo</taxon>
    </lineage>
</organism>
<gene>
    <name type="primary">PROKR1</name>
    <name type="synonym">GPR73</name>
    <name type="synonym">PKR1</name>
</gene>
<sequence>METTMGFMDDNATNTSTSFLSVLNPHGAHATSFPFNFSYSDYDMPLDEDEDVTNSRTFFAAKIVIGMALVGIMLVCGIGNFIFIAALVRYKKLRNLTNLLIANLAISDFLVAIVCCPFEMDYYVVRQLSWEHGHVLCTSVNYLRTVSLYVSTNALLAIAIDRYLAIVHPLRPRMKCQTATGLIALVWTVSILIAIPSAYFTTETVLVIVKSQEKIFCGQIWPVDQQLYYKSYFLFIFGIEFVGPVVTMTLCYARISRELWFKAVPGFQTEQIRKRLRCRRKTVLVLMCILTAYVLCWAPFYGFTIVRDFFPTVFVKEKHYLTAFYIVECIAMSNSMINTLCFVTVKNDTVKYFKKIMLLHWKASYNGGKSSADLDLKTIGMPATEEVDCIRLK</sequence>
<feature type="chain" id="PRO_0000070079" description="Prokineticin receptor 1">
    <location>
        <begin position="1"/>
        <end position="393"/>
    </location>
</feature>
<feature type="topological domain" description="Extracellular" evidence="1">
    <location>
        <begin position="1"/>
        <end position="62"/>
    </location>
</feature>
<feature type="transmembrane region" description="Helical; Name=1" evidence="1">
    <location>
        <begin position="63"/>
        <end position="83"/>
    </location>
</feature>
<feature type="topological domain" description="Cytoplasmic" evidence="1">
    <location>
        <begin position="84"/>
        <end position="98"/>
    </location>
</feature>
<feature type="transmembrane region" description="Helical; Name=2" evidence="1">
    <location>
        <begin position="99"/>
        <end position="119"/>
    </location>
</feature>
<feature type="topological domain" description="Extracellular" evidence="1">
    <location>
        <begin position="120"/>
        <end position="146"/>
    </location>
</feature>
<feature type="transmembrane region" description="Helical; Name=3" evidence="1">
    <location>
        <begin position="147"/>
        <end position="167"/>
    </location>
</feature>
<feature type="topological domain" description="Cytoplasmic" evidence="1">
    <location>
        <begin position="168"/>
        <end position="180"/>
    </location>
</feature>
<feature type="transmembrane region" description="Helical; Name=4" evidence="1">
    <location>
        <begin position="181"/>
        <end position="201"/>
    </location>
</feature>
<feature type="topological domain" description="Extracellular" evidence="1">
    <location>
        <begin position="202"/>
        <end position="232"/>
    </location>
</feature>
<feature type="transmembrane region" description="Helical; Name=5" evidence="1">
    <location>
        <begin position="233"/>
        <end position="253"/>
    </location>
</feature>
<feature type="topological domain" description="Cytoplasmic" evidence="1">
    <location>
        <begin position="254"/>
        <end position="282"/>
    </location>
</feature>
<feature type="transmembrane region" description="Helical; Name=6" evidence="1">
    <location>
        <begin position="283"/>
        <end position="303"/>
    </location>
</feature>
<feature type="topological domain" description="Extracellular" evidence="1">
    <location>
        <begin position="304"/>
        <end position="322"/>
    </location>
</feature>
<feature type="transmembrane region" description="Helical; Name=7" evidence="1">
    <location>
        <begin position="323"/>
        <end position="343"/>
    </location>
</feature>
<feature type="topological domain" description="Cytoplasmic" evidence="1">
    <location>
        <begin position="344"/>
        <end position="393"/>
    </location>
</feature>
<feature type="glycosylation site" description="N-linked (GlcNAc...) asparagine" evidence="1">
    <location>
        <position position="11"/>
    </location>
</feature>
<feature type="glycosylation site" description="N-linked (GlcNAc...) asparagine" evidence="1">
    <location>
        <position position="14"/>
    </location>
</feature>
<feature type="glycosylation site" description="N-linked (GlcNAc...) asparagine" evidence="1">
    <location>
        <position position="36"/>
    </location>
</feature>
<feature type="disulfide bond" evidence="2">
    <location>
        <begin position="137"/>
        <end position="217"/>
    </location>
</feature>
<feature type="sequence variant" id="VAR_024261" description="In dbSNP:rs7570797.">
    <original>S</original>
    <variation>G</variation>
    <location>
        <position position="40"/>
    </location>
</feature>
<feature type="sequence conflict" description="In Ref. 3; AAM48127." evidence="4" ref="3">
    <original>IS</original>
    <variation>MT</variation>
    <location>
        <begin position="255"/>
        <end position="256"/>
    </location>
</feature>
<evidence type="ECO:0000255" key="1"/>
<evidence type="ECO:0000255" key="2">
    <source>
        <dbReference type="PROSITE-ProRule" id="PRU00521"/>
    </source>
</evidence>
<evidence type="ECO:0000269" key="3">
    <source>
    </source>
</evidence>
<evidence type="ECO:0000305" key="4"/>
<name>PKR1_HUMAN</name>